<protein>
    <recommendedName>
        <fullName>Thylakoid lumenal 15.0 kDa protein 2, chloroplastic</fullName>
    </recommendedName>
</protein>
<comment type="subcellular location">
    <subcellularLocation>
        <location evidence="3">Plastid</location>
        <location evidence="3">Chloroplast thylakoid lumen</location>
    </subcellularLocation>
</comment>
<comment type="sequence caution" evidence="6">
    <conflict type="erroneous gene model prediction">
        <sequence resource="EMBL-CDS" id="BAA97137"/>
    </conflict>
</comment>
<sequence length="223" mass="24569">MAMLFRPPPSQCRSFSPFVFNYSSREVSSSSRLSLKTSGDEENWVSRFRSKSLSLVFSGALALGLSLSGVGFADAKVGVNKPELLPKEFTSVIDVADFLSNGQEKRIAQEIANLEKDTGFKLRVLAQNYPVTPGLAIKDFWQVDDSTIVFVADPTFGNILNFNVGATVDLDIPRSFWSRLAGKYGNMFYWKEKGEDASIEAAVMAISSCLREPVGRNNCAEIQ</sequence>
<evidence type="ECO:0000255" key="1"/>
<evidence type="ECO:0000269" key="2">
    <source>
    </source>
</evidence>
<evidence type="ECO:0000269" key="3">
    <source>
    </source>
</evidence>
<evidence type="ECO:0000269" key="4">
    <source>
    </source>
</evidence>
<evidence type="ECO:0000303" key="5">
    <source>
    </source>
</evidence>
<evidence type="ECO:0000305" key="6"/>
<evidence type="ECO:0000312" key="7">
    <source>
        <dbReference type="EMBL" id="AAK82479.1"/>
    </source>
</evidence>
<evidence type="ECO:0000312" key="8">
    <source>
        <dbReference type="EMBL" id="BAA97137.1"/>
    </source>
</evidence>
<keyword id="KW-0150">Chloroplast</keyword>
<keyword id="KW-0903">Direct protein sequencing</keyword>
<keyword id="KW-0934">Plastid</keyword>
<keyword id="KW-1185">Reference proteome</keyword>
<keyword id="KW-0793">Thylakoid</keyword>
<keyword id="KW-0809">Transit peptide</keyword>
<feature type="transit peptide" description="Chloroplast" evidence="1 5">
    <location>
        <begin position="1"/>
        <end status="unknown"/>
    </location>
</feature>
<feature type="transit peptide" description="Thylakoid" evidence="3">
    <location>
        <begin status="unknown"/>
        <end position="75"/>
    </location>
</feature>
<feature type="chain" id="PRO_0000287917" description="Thylakoid lumenal 15.0 kDa protein 2, chloroplastic">
    <location>
        <begin position="76"/>
        <end position="223"/>
    </location>
</feature>
<gene>
    <name type="ordered locus">At5g52970</name>
    <name type="ORF">MNB8_3</name>
</gene>
<accession>Q9LVV5</accession>
<accession>Q94AF5</accession>
<organism>
    <name type="scientific">Arabidopsis thaliana</name>
    <name type="common">Mouse-ear cress</name>
    <dbReference type="NCBI Taxonomy" id="3702"/>
    <lineage>
        <taxon>Eukaryota</taxon>
        <taxon>Viridiplantae</taxon>
        <taxon>Streptophyta</taxon>
        <taxon>Embryophyta</taxon>
        <taxon>Tracheophyta</taxon>
        <taxon>Spermatophyta</taxon>
        <taxon>Magnoliopsida</taxon>
        <taxon>eudicotyledons</taxon>
        <taxon>Gunneridae</taxon>
        <taxon>Pentapetalae</taxon>
        <taxon>rosids</taxon>
        <taxon>malvids</taxon>
        <taxon>Brassicales</taxon>
        <taxon>Brassicaceae</taxon>
        <taxon>Camelineae</taxon>
        <taxon>Arabidopsis</taxon>
    </lineage>
</organism>
<dbReference type="EMBL" id="AB018116">
    <property type="protein sequence ID" value="BAA97137.1"/>
    <property type="status" value="ALT_SEQ"/>
    <property type="molecule type" value="Genomic_DNA"/>
</dbReference>
<dbReference type="EMBL" id="CP002688">
    <property type="protein sequence ID" value="AED96284.1"/>
    <property type="molecule type" value="Genomic_DNA"/>
</dbReference>
<dbReference type="EMBL" id="CP002688">
    <property type="protein sequence ID" value="ANM68272.1"/>
    <property type="molecule type" value="Genomic_DNA"/>
</dbReference>
<dbReference type="EMBL" id="AY048216">
    <property type="protein sequence ID" value="AAK82479.1"/>
    <property type="molecule type" value="mRNA"/>
</dbReference>
<dbReference type="EMBL" id="AY091710">
    <property type="protein sequence ID" value="AAM10309.1"/>
    <property type="molecule type" value="mRNA"/>
</dbReference>
<dbReference type="RefSeq" id="NP_001318791.1">
    <property type="nucleotide sequence ID" value="NM_001345017.1"/>
</dbReference>
<dbReference type="RefSeq" id="NP_568781.1">
    <property type="nucleotide sequence ID" value="NM_124675.3"/>
</dbReference>
<dbReference type="SMR" id="Q9LVV5"/>
<dbReference type="BioGRID" id="20620">
    <property type="interactions" value="1"/>
</dbReference>
<dbReference type="FunCoup" id="Q9LVV5">
    <property type="interactions" value="1125"/>
</dbReference>
<dbReference type="IntAct" id="Q9LVV5">
    <property type="interactions" value="1"/>
</dbReference>
<dbReference type="STRING" id="3702.Q9LVV5"/>
<dbReference type="GlyGen" id="Q9LVV5">
    <property type="glycosylation" value="1 site"/>
</dbReference>
<dbReference type="PaxDb" id="3702-AT5G52970.1"/>
<dbReference type="ProteomicsDB" id="234318"/>
<dbReference type="EnsemblPlants" id="AT5G52970.1">
    <property type="protein sequence ID" value="AT5G52970.1"/>
    <property type="gene ID" value="AT5G52970"/>
</dbReference>
<dbReference type="EnsemblPlants" id="AT5G52970.2">
    <property type="protein sequence ID" value="AT5G52970.2"/>
    <property type="gene ID" value="AT5G52970"/>
</dbReference>
<dbReference type="GeneID" id="835375"/>
<dbReference type="Gramene" id="AT5G52970.1">
    <property type="protein sequence ID" value="AT5G52970.1"/>
    <property type="gene ID" value="AT5G52970"/>
</dbReference>
<dbReference type="Gramene" id="AT5G52970.2">
    <property type="protein sequence ID" value="AT5G52970.2"/>
    <property type="gene ID" value="AT5G52970"/>
</dbReference>
<dbReference type="KEGG" id="ath:AT5G52970"/>
<dbReference type="Araport" id="AT5G52970"/>
<dbReference type="TAIR" id="AT5G52970"/>
<dbReference type="eggNOG" id="ENOG502QVHQ">
    <property type="taxonomic scope" value="Eukaryota"/>
</dbReference>
<dbReference type="HOGENOM" id="CLU_090456_0_0_1"/>
<dbReference type="InParanoid" id="Q9LVV5"/>
<dbReference type="OMA" id="NNCAEVK"/>
<dbReference type="PhylomeDB" id="Q9LVV5"/>
<dbReference type="PRO" id="PR:Q9LVV5"/>
<dbReference type="Proteomes" id="UP000006548">
    <property type="component" value="Chromosome 5"/>
</dbReference>
<dbReference type="ExpressionAtlas" id="Q9LVV5">
    <property type="expression patterns" value="baseline and differential"/>
</dbReference>
<dbReference type="GO" id="GO:0009507">
    <property type="term" value="C:chloroplast"/>
    <property type="evidence" value="ECO:0007005"/>
    <property type="project" value="TAIR"/>
</dbReference>
<dbReference type="GO" id="GO:0009543">
    <property type="term" value="C:chloroplast thylakoid lumen"/>
    <property type="evidence" value="ECO:0007669"/>
    <property type="project" value="UniProtKB-SubCell"/>
</dbReference>
<dbReference type="GO" id="GO:0009579">
    <property type="term" value="C:thylakoid"/>
    <property type="evidence" value="ECO:0007005"/>
    <property type="project" value="TAIR"/>
</dbReference>
<dbReference type="GO" id="GO:0031977">
    <property type="term" value="C:thylakoid lumen"/>
    <property type="evidence" value="ECO:0007005"/>
    <property type="project" value="TAIR"/>
</dbReference>
<dbReference type="InterPro" id="IPR007621">
    <property type="entry name" value="TPM_dom"/>
</dbReference>
<dbReference type="PANTHER" id="PTHR35514">
    <property type="entry name" value="THYLAKOID LUMENAL 15.0 KDA PROTEIN 2, CHLOROPLASTIC"/>
    <property type="match status" value="1"/>
</dbReference>
<dbReference type="PANTHER" id="PTHR35514:SF1">
    <property type="entry name" value="THYLAKOID LUMENAL 15.0 KDA PROTEIN 2, CHLOROPLASTIC"/>
    <property type="match status" value="1"/>
</dbReference>
<dbReference type="Pfam" id="PF04536">
    <property type="entry name" value="TPM_phosphatase"/>
    <property type="match status" value="1"/>
</dbReference>
<name>TL15B_ARATH</name>
<reference evidence="8" key="1">
    <citation type="journal article" date="2000" name="DNA Res.">
        <title>Structural analysis of Arabidopsis thaliana chromosome 5. X. Sequence features of the regions of 3,076,755 bp covered by sixty P1 and TAC clones.</title>
        <authorList>
            <person name="Sato S."/>
            <person name="Nakamura Y."/>
            <person name="Kaneko T."/>
            <person name="Katoh T."/>
            <person name="Asamizu E."/>
            <person name="Kotani H."/>
            <person name="Tabata S."/>
        </authorList>
    </citation>
    <scope>NUCLEOTIDE SEQUENCE [LARGE SCALE GENOMIC DNA]</scope>
    <source>
        <strain evidence="2">cv. Columbia</strain>
    </source>
</reference>
<reference key="2">
    <citation type="journal article" date="2017" name="Plant J.">
        <title>Araport11: a complete reannotation of the Arabidopsis thaliana reference genome.</title>
        <authorList>
            <person name="Cheng C.Y."/>
            <person name="Krishnakumar V."/>
            <person name="Chan A.P."/>
            <person name="Thibaud-Nissen F."/>
            <person name="Schobel S."/>
            <person name="Town C.D."/>
        </authorList>
    </citation>
    <scope>GENOME REANNOTATION</scope>
    <source>
        <strain>cv. Columbia</strain>
    </source>
</reference>
<reference evidence="6 7" key="3">
    <citation type="journal article" date="2003" name="Science">
        <title>Empirical analysis of transcriptional activity in the Arabidopsis genome.</title>
        <authorList>
            <person name="Yamada K."/>
            <person name="Lim J."/>
            <person name="Dale J.M."/>
            <person name="Chen H."/>
            <person name="Shinn P."/>
            <person name="Palm C.J."/>
            <person name="Southwick A.M."/>
            <person name="Wu H.C."/>
            <person name="Kim C.J."/>
            <person name="Nguyen M."/>
            <person name="Pham P.K."/>
            <person name="Cheuk R.F."/>
            <person name="Karlin-Newmann G."/>
            <person name="Liu S.X."/>
            <person name="Lam B."/>
            <person name="Sakano H."/>
            <person name="Wu T."/>
            <person name="Yu G."/>
            <person name="Miranda M."/>
            <person name="Quach H.L."/>
            <person name="Tripp M."/>
            <person name="Chang C.H."/>
            <person name="Lee J.M."/>
            <person name="Toriumi M.J."/>
            <person name="Chan M.M."/>
            <person name="Tang C.C."/>
            <person name="Onodera C.S."/>
            <person name="Deng J.M."/>
            <person name="Akiyama K."/>
            <person name="Ansari Y."/>
            <person name="Arakawa T."/>
            <person name="Banh J."/>
            <person name="Banno F."/>
            <person name="Bowser L."/>
            <person name="Brooks S.Y."/>
            <person name="Carninci P."/>
            <person name="Chao Q."/>
            <person name="Choy N."/>
            <person name="Enju A."/>
            <person name="Goldsmith A.D."/>
            <person name="Gurjal M."/>
            <person name="Hansen N.F."/>
            <person name="Hayashizaki Y."/>
            <person name="Johnson-Hopson C."/>
            <person name="Hsuan V.W."/>
            <person name="Iida K."/>
            <person name="Karnes M."/>
            <person name="Khan S."/>
            <person name="Koesema E."/>
            <person name="Ishida J."/>
            <person name="Jiang P.X."/>
            <person name="Jones T."/>
            <person name="Kawai J."/>
            <person name="Kamiya A."/>
            <person name="Meyers C."/>
            <person name="Nakajima M."/>
            <person name="Narusaka M."/>
            <person name="Seki M."/>
            <person name="Sakurai T."/>
            <person name="Satou M."/>
            <person name="Tamse R."/>
            <person name="Vaysberg M."/>
            <person name="Wallender E.K."/>
            <person name="Wong C."/>
            <person name="Yamamura Y."/>
            <person name="Yuan S."/>
            <person name="Shinozaki K."/>
            <person name="Davis R.W."/>
            <person name="Theologis A."/>
            <person name="Ecker J.R."/>
        </authorList>
    </citation>
    <scope>NUCLEOTIDE SEQUENCE [LARGE SCALE MRNA]</scope>
    <source>
        <strain evidence="4">cv. Columbia</strain>
    </source>
</reference>
<reference evidence="6" key="4">
    <citation type="journal article" date="2002" name="J. Biol. Chem.">
        <title>Proteome map of the chloroplast lumen of Arabidopsis thaliana.</title>
        <authorList>
            <person name="Schubert M."/>
            <person name="Petersson U.A."/>
            <person name="Haas B.J."/>
            <person name="Funk C."/>
            <person name="Schroeder W.P."/>
            <person name="Kieselbach T."/>
        </authorList>
    </citation>
    <scope>PROTEIN SEQUENCE OF 76-95</scope>
    <scope>SUBCELLULAR LOCATION</scope>
    <source>
        <strain evidence="3">cv. Columbia</strain>
    </source>
</reference>
<proteinExistence type="evidence at protein level"/>